<proteinExistence type="evidence at protein level"/>
<gene>
    <name evidence="6" type="primary">rmlA</name>
    <name evidence="7" type="synonym">rfbA</name>
    <name type="ordered locus">Rv0334</name>
</gene>
<name>RMLA_MYCTU</name>
<dbReference type="EC" id="2.7.7.24" evidence="3 4 5"/>
<dbReference type="EMBL" id="U55242">
    <property type="protein sequence ID" value="AAB66657.1"/>
    <property type="molecule type" value="Genomic_DNA"/>
</dbReference>
<dbReference type="EMBL" id="AL123456">
    <property type="protein sequence ID" value="CCP43064.1"/>
    <property type="molecule type" value="Genomic_DNA"/>
</dbReference>
<dbReference type="PIR" id="G70527">
    <property type="entry name" value="G70527"/>
</dbReference>
<dbReference type="RefSeq" id="NP_214848.1">
    <property type="nucleotide sequence ID" value="NC_000962.3"/>
</dbReference>
<dbReference type="RefSeq" id="WP_003401670.1">
    <property type="nucleotide sequence ID" value="NZ_NVQJ01000026.1"/>
</dbReference>
<dbReference type="PDB" id="6B5E">
    <property type="method" value="X-ray"/>
    <property type="resolution" value="1.85 A"/>
    <property type="chains" value="A/B/C/D/E/F/G/H=1-288"/>
</dbReference>
<dbReference type="PDB" id="6B5K">
    <property type="method" value="X-ray"/>
    <property type="resolution" value="1.60 A"/>
    <property type="chains" value="A/B=1-288"/>
</dbReference>
<dbReference type="PDBsum" id="6B5E"/>
<dbReference type="PDBsum" id="6B5K"/>
<dbReference type="SMR" id="P9WH13"/>
<dbReference type="FunCoup" id="P9WH13">
    <property type="interactions" value="54"/>
</dbReference>
<dbReference type="STRING" id="83332.Rv0334"/>
<dbReference type="iPTMnet" id="P9WH13"/>
<dbReference type="PaxDb" id="83332-Rv0334"/>
<dbReference type="DNASU" id="886568"/>
<dbReference type="GeneID" id="45424301"/>
<dbReference type="GeneID" id="886568"/>
<dbReference type="KEGG" id="mtu:Rv0334"/>
<dbReference type="KEGG" id="mtv:RVBD_0334"/>
<dbReference type="TubercuList" id="Rv0334"/>
<dbReference type="eggNOG" id="COG1209">
    <property type="taxonomic scope" value="Bacteria"/>
</dbReference>
<dbReference type="InParanoid" id="P9WH13"/>
<dbReference type="OrthoDB" id="9803871at2"/>
<dbReference type="PhylomeDB" id="P9WH13"/>
<dbReference type="BRENDA" id="2.7.7.24">
    <property type="organism ID" value="3445"/>
</dbReference>
<dbReference type="UniPathway" id="UPA00124"/>
<dbReference type="Proteomes" id="UP000001584">
    <property type="component" value="Chromosome"/>
</dbReference>
<dbReference type="GO" id="GO:0009274">
    <property type="term" value="C:peptidoglycan-based cell wall"/>
    <property type="evidence" value="ECO:0007005"/>
    <property type="project" value="MTBBASE"/>
</dbReference>
<dbReference type="GO" id="GO:0005886">
    <property type="term" value="C:plasma membrane"/>
    <property type="evidence" value="ECO:0007005"/>
    <property type="project" value="MTBBASE"/>
</dbReference>
<dbReference type="GO" id="GO:0008879">
    <property type="term" value="F:glucose-1-phosphate thymidylyltransferase activity"/>
    <property type="evidence" value="ECO:0000314"/>
    <property type="project" value="MTBBASE"/>
</dbReference>
<dbReference type="GO" id="GO:0000287">
    <property type="term" value="F:magnesium ion binding"/>
    <property type="evidence" value="ECO:0000250"/>
    <property type="project" value="UniProtKB"/>
</dbReference>
<dbReference type="GO" id="GO:0019305">
    <property type="term" value="P:dTDP-rhamnose biosynthetic process"/>
    <property type="evidence" value="ECO:0000315"/>
    <property type="project" value="MTBBASE"/>
</dbReference>
<dbReference type="GO" id="GO:0046075">
    <property type="term" value="P:dTTP metabolic process"/>
    <property type="evidence" value="ECO:0000314"/>
    <property type="project" value="MTBBASE"/>
</dbReference>
<dbReference type="GO" id="GO:0006006">
    <property type="term" value="P:glucose metabolic process"/>
    <property type="evidence" value="ECO:0000314"/>
    <property type="project" value="MTBBASE"/>
</dbReference>
<dbReference type="GO" id="GO:0000271">
    <property type="term" value="P:polysaccharide biosynthetic process"/>
    <property type="evidence" value="ECO:0000314"/>
    <property type="project" value="UniProtKB"/>
</dbReference>
<dbReference type="CDD" id="cd02538">
    <property type="entry name" value="G1P_TT_short"/>
    <property type="match status" value="1"/>
</dbReference>
<dbReference type="FunFam" id="3.90.550.10:FF:000023">
    <property type="entry name" value="Glucose-1-phosphate thymidylyltransferase"/>
    <property type="match status" value="1"/>
</dbReference>
<dbReference type="Gene3D" id="3.90.550.10">
    <property type="entry name" value="Spore Coat Polysaccharide Biosynthesis Protein SpsA, Chain A"/>
    <property type="match status" value="1"/>
</dbReference>
<dbReference type="InterPro" id="IPR005907">
    <property type="entry name" value="G1P_thy_trans_s"/>
</dbReference>
<dbReference type="InterPro" id="IPR005835">
    <property type="entry name" value="NTP_transferase_dom"/>
</dbReference>
<dbReference type="InterPro" id="IPR029044">
    <property type="entry name" value="Nucleotide-diphossugar_trans"/>
</dbReference>
<dbReference type="NCBIfam" id="TIGR01207">
    <property type="entry name" value="rmlA"/>
    <property type="match status" value="1"/>
</dbReference>
<dbReference type="PANTHER" id="PTHR43532">
    <property type="entry name" value="GLUCOSE-1-PHOSPHATE THYMIDYLYLTRANSFERASE"/>
    <property type="match status" value="1"/>
</dbReference>
<dbReference type="PANTHER" id="PTHR43532:SF1">
    <property type="entry name" value="GLUCOSE-1-PHOSPHATE THYMIDYLYLTRANSFERASE 1"/>
    <property type="match status" value="1"/>
</dbReference>
<dbReference type="Pfam" id="PF00483">
    <property type="entry name" value="NTP_transferase"/>
    <property type="match status" value="1"/>
</dbReference>
<dbReference type="SUPFAM" id="SSF53448">
    <property type="entry name" value="Nucleotide-diphospho-sugar transferases"/>
    <property type="match status" value="1"/>
</dbReference>
<comment type="function">
    <text evidence="1 3 4 5">Catalyzes the conversion of glucose-1-phosphate and dTTP to dTDP-glucose and pyrophosphate (PubMed:29076563, PubMed:33868202, PubMed:9084178). Involved in the biosynthesis of the dTDP-L-rhamnose which is a component of the critical linker, D-N-acetylglucosamine-L-rhamnose disaccharide, which connects the galactan region of arabinogalactan to peptidoglycan via a phosphodiester linkage (PubMed:17784859, PubMed:9084178).</text>
</comment>
<comment type="catalytic activity">
    <reaction evidence="3 4 5">
        <text>dTTP + alpha-D-glucose 1-phosphate + H(+) = dTDP-alpha-D-glucose + diphosphate</text>
        <dbReference type="Rhea" id="RHEA:15225"/>
        <dbReference type="ChEBI" id="CHEBI:15378"/>
        <dbReference type="ChEBI" id="CHEBI:33019"/>
        <dbReference type="ChEBI" id="CHEBI:37568"/>
        <dbReference type="ChEBI" id="CHEBI:57477"/>
        <dbReference type="ChEBI" id="CHEBI:58601"/>
        <dbReference type="EC" id="2.7.7.24"/>
    </reaction>
</comment>
<comment type="cofactor">
    <cofactor evidence="3">
        <name>Mg(2+)</name>
        <dbReference type="ChEBI" id="CHEBI:18420"/>
    </cofactor>
    <text evidence="3">Binds 1 Mg(2+) ion per subunit.</text>
</comment>
<comment type="activity regulation">
    <text evidence="4">Phosphorylation by the serine/threonine-protein kinase PknB down-regulates thymidylyltransferase activity.</text>
</comment>
<comment type="biophysicochemical properties">
    <kinetics>
        <KM evidence="3">32.7 uM for glucose-1-phosphate</KM>
        <KM evidence="3">10.6 uM for dTTP</KM>
        <text evidence="3">kcat is 7.3 sec(-1) with glucose-1-phosphate as substrate. kcat is 7.9 sec(-1) with dTTP as substrate.</text>
    </kinetics>
</comment>
<comment type="pathway">
    <text evidence="9">Carbohydrate biosynthesis; dTDP-L-rhamnose biosynthesis.</text>
</comment>
<comment type="subunit">
    <text evidence="3">Homotetramer.</text>
</comment>
<comment type="PTM">
    <text evidence="4">Phosphorylated on Thr-12, Thr-54 and Thr-197 by PknB (PubMed:33868202). Thr-12 is the primary phosphorylation site (PubMed:33868202).</text>
</comment>
<comment type="miscellaneous">
    <text evidence="2">Identified as a drug target.</text>
</comment>
<comment type="similarity">
    <text evidence="8">Belongs to the glucose-1-phosphate thymidylyltransferase family.</text>
</comment>
<sequence length="288" mass="31492">MRGIILAGGSGTRLYPITMGISKQLLPVYDKPMIYYPLTTLMMAGIRDIQLITTPHDAPGFHRLLGDGAHLGVNISYATQDQPDGLAQAFVIGANHIGADSVALVLGDNIFYGPGLGTSLKRFQSISGGAIFAYWVANPSAYGVVEFGAEGMALSLEEKPVTPKSNYAVPGLYFYDNDVIEIARGLKKSARGEYEITEVNQVYLNQGRLAVEVLARGTAWLDTGTFDSLLDAADFVRTLERRQGLKVSIPEEVAWRMGWIDDEQLVQRARALVKSGYGNYLLELLERN</sequence>
<organism>
    <name type="scientific">Mycobacterium tuberculosis (strain ATCC 25618 / H37Rv)</name>
    <dbReference type="NCBI Taxonomy" id="83332"/>
    <lineage>
        <taxon>Bacteria</taxon>
        <taxon>Bacillati</taxon>
        <taxon>Actinomycetota</taxon>
        <taxon>Actinomycetes</taxon>
        <taxon>Mycobacteriales</taxon>
        <taxon>Mycobacteriaceae</taxon>
        <taxon>Mycobacterium</taxon>
        <taxon>Mycobacterium tuberculosis complex</taxon>
    </lineage>
</organism>
<protein>
    <recommendedName>
        <fullName evidence="7">Glucose-1-phosphate thymidylyltransferase</fullName>
        <shortName evidence="7">Glc-1-P thymidylyltransferase</shortName>
        <ecNumber evidence="3 4 5">2.7.7.24</ecNumber>
    </recommendedName>
    <alternativeName>
        <fullName>dTDP-glucose pyrophosphorylase</fullName>
    </alternativeName>
    <alternativeName>
        <fullName>dTDP-glucose synthase</fullName>
    </alternativeName>
</protein>
<accession>P9WH13</accession>
<accession>L0T524</accession>
<accession>P72017</accession>
<accession>Q797X3</accession>
<accession>Q7DA01</accession>
<keyword id="KW-0002">3D-structure</keyword>
<keyword id="KW-0460">Magnesium</keyword>
<keyword id="KW-0479">Metal-binding</keyword>
<keyword id="KW-0548">Nucleotidyltransferase</keyword>
<keyword id="KW-0597">Phosphoprotein</keyword>
<keyword id="KW-1185">Reference proteome</keyword>
<keyword id="KW-0808">Transferase</keyword>
<feature type="chain" id="PRO_0000395347" description="Glucose-1-phosphate thymidylyltransferase">
    <location>
        <begin position="1"/>
        <end position="288"/>
    </location>
</feature>
<feature type="binding site" evidence="3 10">
    <location>
        <position position="8"/>
    </location>
    <ligand>
        <name>dTDP-alpha-D-glucose</name>
        <dbReference type="ChEBI" id="CHEBI:57477"/>
    </ligand>
</feature>
<feature type="binding site" evidence="3 11">
    <location>
        <position position="8"/>
    </location>
    <ligand>
        <name>dTTP</name>
        <dbReference type="ChEBI" id="CHEBI:37568"/>
    </ligand>
</feature>
<feature type="binding site" evidence="3 11">
    <location>
        <position position="11"/>
    </location>
    <ligand>
        <name>dTTP</name>
        <dbReference type="ChEBI" id="CHEBI:37568"/>
    </ligand>
</feature>
<feature type="binding site" evidence="3 11">
    <location>
        <position position="12"/>
    </location>
    <ligand>
        <name>dTTP</name>
        <dbReference type="ChEBI" id="CHEBI:37568"/>
    </ligand>
</feature>
<feature type="binding site" evidence="3 11">
    <location>
        <position position="13"/>
    </location>
    <ligand>
        <name>dTTP</name>
        <dbReference type="ChEBI" id="CHEBI:37568"/>
    </ligand>
</feature>
<feature type="binding site" evidence="3 10">
    <location>
        <position position="23"/>
    </location>
    <ligand>
        <name>dTDP-alpha-D-glucose</name>
        <dbReference type="ChEBI" id="CHEBI:57477"/>
    </ligand>
</feature>
<feature type="binding site" evidence="3 11">
    <location>
        <position position="23"/>
    </location>
    <ligand>
        <name>dTTP</name>
        <dbReference type="ChEBI" id="CHEBI:37568"/>
    </ligand>
</feature>
<feature type="binding site" evidence="3 10">
    <location>
        <position position="24"/>
    </location>
    <ligand>
        <name>dTDP-alpha-D-glucose</name>
        <dbReference type="ChEBI" id="CHEBI:57477"/>
    </ligand>
</feature>
<feature type="binding site" evidence="3 11">
    <location>
        <position position="24"/>
    </location>
    <ligand>
        <name>dTTP</name>
        <dbReference type="ChEBI" id="CHEBI:37568"/>
    </ligand>
</feature>
<feature type="binding site" evidence="3 10">
    <location>
        <position position="80"/>
    </location>
    <ligand>
        <name>dTDP-alpha-D-glucose</name>
        <dbReference type="ChEBI" id="CHEBI:57477"/>
    </ligand>
</feature>
<feature type="binding site" evidence="3 11">
    <location>
        <position position="80"/>
    </location>
    <ligand>
        <name>dTTP</name>
        <dbReference type="ChEBI" id="CHEBI:37568"/>
    </ligand>
</feature>
<feature type="binding site" evidence="3 10">
    <location>
        <position position="85"/>
    </location>
    <ligand>
        <name>dTDP-alpha-D-glucose</name>
        <dbReference type="ChEBI" id="CHEBI:57477"/>
    </ligand>
</feature>
<feature type="binding site" evidence="3 11">
    <location>
        <position position="85"/>
    </location>
    <ligand>
        <name>dTTP</name>
        <dbReference type="ChEBI" id="CHEBI:37568"/>
    </ligand>
</feature>
<feature type="binding site" evidence="3 10">
    <location>
        <position position="108"/>
    </location>
    <ligand>
        <name>dTDP-alpha-D-glucose</name>
        <dbReference type="ChEBI" id="CHEBI:57477"/>
    </ligand>
</feature>
<feature type="binding site" evidence="3 11">
    <location>
        <position position="108"/>
    </location>
    <ligand>
        <name>dTTP</name>
        <dbReference type="ChEBI" id="CHEBI:37568"/>
    </ligand>
</feature>
<feature type="binding site" evidence="3 10 11">
    <location>
        <position position="108"/>
    </location>
    <ligand>
        <name>Mg(2+)</name>
        <dbReference type="ChEBI" id="CHEBI:18420"/>
    </ligand>
</feature>
<feature type="binding site" evidence="3 10">
    <location>
        <position position="109"/>
    </location>
    <ligand>
        <name>dTDP-alpha-D-glucose</name>
        <dbReference type="ChEBI" id="CHEBI:57477"/>
    </ligand>
</feature>
<feature type="binding site" evidence="3 10">
    <location>
        <position position="143"/>
    </location>
    <ligand>
        <name>dTDP-alpha-D-glucose</name>
        <dbReference type="ChEBI" id="CHEBI:57477"/>
    </ligand>
</feature>
<feature type="binding site" evidence="3 10">
    <location>
        <position position="158"/>
    </location>
    <ligand>
        <name>dTDP-alpha-D-glucose</name>
        <dbReference type="ChEBI" id="CHEBI:57477"/>
    </ligand>
</feature>
<feature type="binding site" evidence="3 10">
    <location>
        <position position="159"/>
    </location>
    <ligand>
        <name>dTDP-alpha-D-glucose</name>
        <dbReference type="ChEBI" id="CHEBI:57477"/>
    </ligand>
</feature>
<feature type="binding site" evidence="3 10">
    <location>
        <position position="169"/>
    </location>
    <ligand>
        <name>dTDP-alpha-D-glucose</name>
        <dbReference type="ChEBI" id="CHEBI:57477"/>
    </ligand>
</feature>
<feature type="binding site" evidence="3 10">
    <location>
        <position position="222"/>
    </location>
    <ligand>
        <name>dTDP-alpha-D-glucose</name>
        <dbReference type="ChEBI" id="CHEBI:57477"/>
    </ligand>
</feature>
<feature type="binding site" evidence="3 10 11">
    <location>
        <position position="222"/>
    </location>
    <ligand>
        <name>Mg(2+)</name>
        <dbReference type="ChEBI" id="CHEBI:18420"/>
    </ligand>
</feature>
<feature type="modified residue" description="Phosphothreonine; by PknB" evidence="4">
    <location>
        <position position="12"/>
    </location>
</feature>
<feature type="modified residue" description="Phosphothreonine; by PknB" evidence="4">
    <location>
        <position position="54"/>
    </location>
</feature>
<feature type="modified residue" description="Phosphothreonine; by PknB" evidence="4">
    <location>
        <position position="197"/>
    </location>
</feature>
<feature type="mutagenesis site" description="Significant loss of phosphorylation. Lack of phosphorylation; when associated with A-54. Decreases activity and negatively affects cell wall formation." evidence="4">
    <original>T</original>
    <variation>A</variation>
    <location>
        <position position="12"/>
    </location>
</feature>
<feature type="mutagenesis site" description="Decreases activity and negatively affects cell wall formation. Attenuates virulence in a macrophage model with promoted cytokine production in host cells." evidence="4">
    <original>T</original>
    <variation>D</variation>
    <location>
        <position position="12"/>
    </location>
</feature>
<feature type="mutagenesis site" description="Small decrease in phosphorylation. Lack of phosphorylation; when associated with A-12." evidence="4">
    <original>T</original>
    <variation>A</variation>
    <location>
        <position position="54"/>
    </location>
</feature>
<feature type="mutagenesis site" description="Small decrease in phosphorylation." evidence="4">
    <original>T</original>
    <variation>A</variation>
    <location>
        <position position="197"/>
    </location>
</feature>
<feature type="strand" evidence="13">
    <location>
        <begin position="2"/>
        <end position="6"/>
    </location>
</feature>
<feature type="helix" evidence="13">
    <location>
        <begin position="12"/>
        <end position="14"/>
    </location>
</feature>
<feature type="helix" evidence="13">
    <location>
        <begin position="17"/>
        <end position="20"/>
    </location>
</feature>
<feature type="helix" evidence="13">
    <location>
        <begin position="23"/>
        <end position="25"/>
    </location>
</feature>
<feature type="strand" evidence="13">
    <location>
        <begin position="29"/>
        <end position="32"/>
    </location>
</feature>
<feature type="helix" evidence="13">
    <location>
        <begin position="35"/>
        <end position="43"/>
    </location>
</feature>
<feature type="strand" evidence="13">
    <location>
        <begin position="48"/>
        <end position="53"/>
    </location>
</feature>
<feature type="turn" evidence="13">
    <location>
        <begin position="55"/>
        <end position="57"/>
    </location>
</feature>
<feature type="helix" evidence="13">
    <location>
        <begin position="58"/>
        <end position="65"/>
    </location>
</feature>
<feature type="helix" evidence="13">
    <location>
        <begin position="69"/>
        <end position="71"/>
    </location>
</feature>
<feature type="strand" evidence="13">
    <location>
        <begin position="73"/>
        <end position="79"/>
    </location>
</feature>
<feature type="helix" evidence="13">
    <location>
        <begin position="88"/>
        <end position="92"/>
    </location>
</feature>
<feature type="helix" evidence="13">
    <location>
        <begin position="94"/>
        <end position="97"/>
    </location>
</feature>
<feature type="strand" evidence="13">
    <location>
        <begin position="102"/>
        <end position="106"/>
    </location>
</feature>
<feature type="strand" evidence="13">
    <location>
        <begin position="109"/>
        <end position="113"/>
    </location>
</feature>
<feature type="helix" evidence="13">
    <location>
        <begin position="118"/>
        <end position="125"/>
    </location>
</feature>
<feature type="strand" evidence="13">
    <location>
        <begin position="127"/>
        <end position="135"/>
    </location>
</feature>
<feature type="helix" evidence="13">
    <location>
        <begin position="139"/>
        <end position="141"/>
    </location>
</feature>
<feature type="strand" evidence="13">
    <location>
        <begin position="142"/>
        <end position="146"/>
    </location>
</feature>
<feature type="strand" evidence="13">
    <location>
        <begin position="155"/>
        <end position="158"/>
    </location>
</feature>
<feature type="strand" evidence="12">
    <location>
        <begin position="166"/>
        <end position="168"/>
    </location>
</feature>
<feature type="strand" evidence="13">
    <location>
        <begin position="171"/>
        <end position="175"/>
    </location>
</feature>
<feature type="helix" evidence="13">
    <location>
        <begin position="179"/>
        <end position="184"/>
    </location>
</feature>
<feature type="helix" evidence="13">
    <location>
        <begin position="196"/>
        <end position="205"/>
    </location>
</feature>
<feature type="strand" evidence="13">
    <location>
        <begin position="209"/>
        <end position="213"/>
    </location>
</feature>
<feature type="strand" evidence="13">
    <location>
        <begin position="219"/>
        <end position="222"/>
    </location>
</feature>
<feature type="helix" evidence="13">
    <location>
        <begin position="226"/>
        <end position="243"/>
    </location>
</feature>
<feature type="helix" evidence="13">
    <location>
        <begin position="250"/>
        <end position="256"/>
    </location>
</feature>
<feature type="helix" evidence="13">
    <location>
        <begin position="262"/>
        <end position="271"/>
    </location>
</feature>
<feature type="turn" evidence="13">
    <location>
        <begin position="272"/>
        <end position="275"/>
    </location>
</feature>
<feature type="helix" evidence="13">
    <location>
        <begin position="277"/>
        <end position="285"/>
    </location>
</feature>
<reference key="1">
    <citation type="journal article" date="1997" name="Microbiology">
        <title>Determination of the pathway for rhamnose biosynthesis in mycobacteria: cloning, sequencing and expression of the Mycobacterium tuberculosis gene encoding alpha-D-glucose-1-phosphate thymidylyltransferase.</title>
        <authorList>
            <person name="Ma Y."/>
            <person name="Mills J.A."/>
            <person name="Belisle J.T."/>
            <person name="Vissa V."/>
            <person name="Howell M."/>
            <person name="Bowlin K."/>
            <person name="Scherman M.S."/>
            <person name="McNeil M."/>
        </authorList>
    </citation>
    <scope>NUCLEOTIDE SEQUENCE [GENOMIC DNA]</scope>
    <scope>FUNCTION AS A THYMIDYLYLTRANSFERASE</scope>
    <scope>CATALYTIC ACTIVITY</scope>
    <source>
        <strain>ATCC 25618 / H37Rv</strain>
    </source>
</reference>
<reference key="2">
    <citation type="journal article" date="1998" name="Nature">
        <title>Deciphering the biology of Mycobacterium tuberculosis from the complete genome sequence.</title>
        <authorList>
            <person name="Cole S.T."/>
            <person name="Brosch R."/>
            <person name="Parkhill J."/>
            <person name="Garnier T."/>
            <person name="Churcher C.M."/>
            <person name="Harris D.E."/>
            <person name="Gordon S.V."/>
            <person name="Eiglmeier K."/>
            <person name="Gas S."/>
            <person name="Barry C.E. III"/>
            <person name="Tekaia F."/>
            <person name="Badcock K."/>
            <person name="Basham D."/>
            <person name="Brown D."/>
            <person name="Chillingworth T."/>
            <person name="Connor R."/>
            <person name="Davies R.M."/>
            <person name="Devlin K."/>
            <person name="Feltwell T."/>
            <person name="Gentles S."/>
            <person name="Hamlin N."/>
            <person name="Holroyd S."/>
            <person name="Hornsby T."/>
            <person name="Jagels K."/>
            <person name="Krogh A."/>
            <person name="McLean J."/>
            <person name="Moule S."/>
            <person name="Murphy L.D."/>
            <person name="Oliver S."/>
            <person name="Osborne J."/>
            <person name="Quail M.A."/>
            <person name="Rajandream M.A."/>
            <person name="Rogers J."/>
            <person name="Rutter S."/>
            <person name="Seeger K."/>
            <person name="Skelton S."/>
            <person name="Squares S."/>
            <person name="Squares R."/>
            <person name="Sulston J.E."/>
            <person name="Taylor K."/>
            <person name="Whitehead S."/>
            <person name="Barrell B.G."/>
        </authorList>
    </citation>
    <scope>NUCLEOTIDE SEQUENCE [LARGE SCALE GENOMIC DNA]</scope>
    <source>
        <strain>ATCC 25618 / H37Rv</strain>
    </source>
</reference>
<reference key="3">
    <citation type="journal article" date="2007" name="FEMS Microbiol. Lett.">
        <title>An rmlA gene encoding d-glucose-1-phosphate thymidylyltransferase is essential for mycobacterial growth.</title>
        <authorList>
            <person name="Qu H."/>
            <person name="Xin Y."/>
            <person name="Dong X."/>
            <person name="Ma Y."/>
        </authorList>
    </citation>
    <scope>FUNCTION IN DTDP-RHAMNOSE BIOSYNTHESIS</scope>
    <source>
        <strain>ATCC 25618 / H37Rv</strain>
    </source>
</reference>
<reference key="4">
    <citation type="journal article" date="2011" name="Mol. Cell. Proteomics">
        <title>Proteogenomic analysis of Mycobacterium tuberculosis by high resolution mass spectrometry.</title>
        <authorList>
            <person name="Kelkar D.S."/>
            <person name="Kumar D."/>
            <person name="Kumar P."/>
            <person name="Balakrishnan L."/>
            <person name="Muthusamy B."/>
            <person name="Yadav A.K."/>
            <person name="Shrivastava P."/>
            <person name="Marimuthu A."/>
            <person name="Anand S."/>
            <person name="Sundaram H."/>
            <person name="Kingsbury R."/>
            <person name="Harsha H.C."/>
            <person name="Nair B."/>
            <person name="Prasad T.S."/>
            <person name="Chauhan D.S."/>
            <person name="Katoch K."/>
            <person name="Katoch V.M."/>
            <person name="Kumar P."/>
            <person name="Chaerkady R."/>
            <person name="Ramachandran S."/>
            <person name="Dash D."/>
            <person name="Pandey A."/>
        </authorList>
    </citation>
    <scope>IDENTIFICATION BY MASS SPECTROMETRY [LARGE SCALE ANALYSIS]</scope>
    <source>
        <strain>ATCC 25618 / H37Rv</strain>
    </source>
</reference>
<reference key="5">
    <citation type="journal article" date="2016" name="Adv. Bioinform.">
        <title>Inhibition of Mycobacterium-RmlA by molecular modeling, dynamics simulation, and docking.</title>
        <authorList>
            <person name="Harathi N."/>
            <person name="Pulaganti M."/>
            <person name="Anuradha C.M."/>
            <person name="Kumar Chitta S."/>
        </authorList>
    </citation>
    <scope>IDENTIFICATION AS A DRUG TARGET</scope>
    <scope>MOLECULAR MODELING</scope>
</reference>
<reference key="6">
    <citation type="journal article" date="2021" name="Front. Microbiol.">
        <title>Mycobacterium tuberculosis thymidylyltransferase RmlA is negatively regulated by Ser/Thr protein kinase PknB.</title>
        <authorList>
            <person name="Qu D."/>
            <person name="Zhao X."/>
            <person name="Sun Y."/>
            <person name="Wu F.L."/>
            <person name="Tao S.C."/>
        </authorList>
    </citation>
    <scope>FUNCTION</scope>
    <scope>CATALYTIC ACTIVITY</scope>
    <scope>ACTIVITY REGULATION</scope>
    <scope>PHOSPHORYLATION AT THR-12; THR-54 AND THR-197</scope>
    <scope>MUTAGENESIS OF THR-12; THR-54 AND THR-197</scope>
</reference>
<reference evidence="10 11" key="7">
    <citation type="journal article" date="2018" name="Protein Sci.">
        <title>The structure of glucose-1-phosphate thymidylyltransferase from Mycobacterium tuberculosis reveals the location of an essential magnesium ion in the RmlA-type enzymes.</title>
        <authorList>
            <person name="Brown H.A."/>
            <person name="Thoden J.B."/>
            <person name="Tipton P.A."/>
            <person name="Holden H.M."/>
        </authorList>
    </citation>
    <scope>X-RAY CRYSTALLOGRAPHY (1.60 ANGSTROMS) IN COMPLEXES WITH DTTP; DTDP-GLUCOSE; DTDP AND MAGNESIUM</scope>
    <scope>FUNCTION</scope>
    <scope>CATALYTIC ACTIVITY</scope>
    <scope>COFACTOR</scope>
    <scope>BIOPHYSICOCHEMICAL PROPERTIES</scope>
    <scope>SUBUNIT</scope>
</reference>
<evidence type="ECO:0000269" key="1">
    <source>
    </source>
</evidence>
<evidence type="ECO:0000269" key="2">
    <source>
    </source>
</evidence>
<evidence type="ECO:0000269" key="3">
    <source>
    </source>
</evidence>
<evidence type="ECO:0000269" key="4">
    <source>
    </source>
</evidence>
<evidence type="ECO:0000269" key="5">
    <source>
    </source>
</evidence>
<evidence type="ECO:0000303" key="6">
    <source>
    </source>
</evidence>
<evidence type="ECO:0000303" key="7">
    <source>
    </source>
</evidence>
<evidence type="ECO:0000305" key="8"/>
<evidence type="ECO:0000305" key="9">
    <source>
    </source>
</evidence>
<evidence type="ECO:0007744" key="10">
    <source>
        <dbReference type="PDB" id="6B5E"/>
    </source>
</evidence>
<evidence type="ECO:0007744" key="11">
    <source>
        <dbReference type="PDB" id="6B5K"/>
    </source>
</evidence>
<evidence type="ECO:0007829" key="12">
    <source>
        <dbReference type="PDB" id="6B5E"/>
    </source>
</evidence>
<evidence type="ECO:0007829" key="13">
    <source>
        <dbReference type="PDB" id="6B5K"/>
    </source>
</evidence>